<proteinExistence type="evidence at transcript level"/>
<feature type="chain" id="PRO_0000328996" description="Cilia- and flagella-associated protein HOATZ">
    <location>
        <begin position="1"/>
        <end position="168"/>
    </location>
</feature>
<feature type="region of interest" description="Disordered" evidence="1">
    <location>
        <begin position="142"/>
        <end position="168"/>
    </location>
</feature>
<feature type="sequence conflict" description="In Ref. 1; BAE21385." evidence="4" ref="1">
    <original>Q</original>
    <variation>H</variation>
    <location>
        <position position="16"/>
    </location>
</feature>
<feature type="sequence conflict" description="In Ref. 1; BAE21385." evidence="4" ref="1">
    <original>E</original>
    <variation>Q</variation>
    <location>
        <position position="31"/>
    </location>
</feature>
<feature type="sequence conflict" description="In Ref. 1; BAE21385." evidence="4" ref="1">
    <original>S</original>
    <variation>T</variation>
    <location>
        <position position="60"/>
    </location>
</feature>
<feature type="sequence conflict" description="In Ref. 1; BAE21385." evidence="4" ref="1">
    <original>A</original>
    <variation>T</variation>
    <location>
        <position position="91"/>
    </location>
</feature>
<feature type="sequence conflict" description="In Ref. 1; BAE21385." evidence="4" ref="1">
    <original>F</original>
    <variation>L</variation>
    <location>
        <position position="94"/>
    </location>
</feature>
<feature type="sequence conflict" description="In Ref. 1; BAE21385." evidence="4" ref="1">
    <original>A</original>
    <variation>E</variation>
    <location>
        <position position="107"/>
    </location>
</feature>
<feature type="sequence conflict" description="In Ref. 1; BAE21385." evidence="4" ref="1">
    <original>A</original>
    <variation>T</variation>
    <location>
        <position position="113"/>
    </location>
</feature>
<comment type="function">
    <text evidence="2">Required for motile ciliogenesis and flagellar genesis by mediating the maturation of the glycolytic enzyme ENO4.</text>
</comment>
<comment type="subcellular location">
    <subcellularLocation>
        <location evidence="2">Cytoplasm</location>
    </subcellularLocation>
    <subcellularLocation>
        <location evidence="2">Cell projection</location>
        <location evidence="2">Cilium</location>
    </subcellularLocation>
</comment>
<comment type="tissue specificity">
    <text evidence="2">Specifically expressed in tissues with motile cilia and flagella, such as brain ependyma, lung, testis, and oviduct but not in whole brain, liver,kidney, spleen, and eyeball.</text>
</comment>
<comment type="developmental stage">
    <text evidence="2">Detected as early as postnatal day 15 (P15), and then continually increased during the first 45 days.</text>
</comment>
<comment type="disruption phenotype">
    <text evidence="2">Male mice exhibit severe defects in spermatogenesis, leading to infertility and varying degrees of hydrocephalus. The epididymal ependymal cilia frequently show disorganized axonemes, reducing motility. Mutant testis shown lack of fully developed flagella in the lumen of the seminiferous tubules; the mutant spermatids elongate but do not maintain the axoneme, leading to severe destruction of the flagella. In contrast, the ultrastructures of motile cilia in the tracheal epithelia are intact. The deficient mice do not display laterality defects, polydactyly, polycystic kidney, or other notable abdominal organ abnormalities indicating that the nodal and primary cilia were unaffected.</text>
</comment>
<comment type="miscellaneous">
    <text evidence="5">Named Hoatz according to the Hydrocephalus and Oligo-Astheno-Terato-Zoospermia phenotype of Hoatz knockout mice.</text>
</comment>
<comment type="similarity">
    <text evidence="4">Belongs to the HOATZ family.</text>
</comment>
<evidence type="ECO:0000256" key="1">
    <source>
        <dbReference type="SAM" id="MobiDB-lite"/>
    </source>
</evidence>
<evidence type="ECO:0000269" key="2">
    <source>
    </source>
</evidence>
<evidence type="ECO:0000303" key="3">
    <source>
    </source>
</evidence>
<evidence type="ECO:0000305" key="4"/>
<evidence type="ECO:0000305" key="5">
    <source>
    </source>
</evidence>
<evidence type="ECO:0000312" key="6">
    <source>
        <dbReference type="MGI" id="MGI:1921013"/>
    </source>
</evidence>
<organism>
    <name type="scientific">Mus musculus</name>
    <name type="common">Mouse</name>
    <dbReference type="NCBI Taxonomy" id="10090"/>
    <lineage>
        <taxon>Eukaryota</taxon>
        <taxon>Metazoa</taxon>
        <taxon>Chordata</taxon>
        <taxon>Craniata</taxon>
        <taxon>Vertebrata</taxon>
        <taxon>Euteleostomi</taxon>
        <taxon>Mammalia</taxon>
        <taxon>Eutheria</taxon>
        <taxon>Euarchontoglires</taxon>
        <taxon>Glires</taxon>
        <taxon>Rodentia</taxon>
        <taxon>Myomorpha</taxon>
        <taxon>Muroidea</taxon>
        <taxon>Muridae</taxon>
        <taxon>Murinae</taxon>
        <taxon>Mus</taxon>
        <taxon>Mus</taxon>
    </lineage>
</organism>
<reference key="1">
    <citation type="journal article" date="2005" name="Science">
        <title>The transcriptional landscape of the mammalian genome.</title>
        <authorList>
            <person name="Carninci P."/>
            <person name="Kasukawa T."/>
            <person name="Katayama S."/>
            <person name="Gough J."/>
            <person name="Frith M.C."/>
            <person name="Maeda N."/>
            <person name="Oyama R."/>
            <person name="Ravasi T."/>
            <person name="Lenhard B."/>
            <person name="Wells C."/>
            <person name="Kodzius R."/>
            <person name="Shimokawa K."/>
            <person name="Bajic V.B."/>
            <person name="Brenner S.E."/>
            <person name="Batalov S."/>
            <person name="Forrest A.R."/>
            <person name="Zavolan M."/>
            <person name="Davis M.J."/>
            <person name="Wilming L.G."/>
            <person name="Aidinis V."/>
            <person name="Allen J.E."/>
            <person name="Ambesi-Impiombato A."/>
            <person name="Apweiler R."/>
            <person name="Aturaliya R.N."/>
            <person name="Bailey T.L."/>
            <person name="Bansal M."/>
            <person name="Baxter L."/>
            <person name="Beisel K.W."/>
            <person name="Bersano T."/>
            <person name="Bono H."/>
            <person name="Chalk A.M."/>
            <person name="Chiu K.P."/>
            <person name="Choudhary V."/>
            <person name="Christoffels A."/>
            <person name="Clutterbuck D.R."/>
            <person name="Crowe M.L."/>
            <person name="Dalla E."/>
            <person name="Dalrymple B.P."/>
            <person name="de Bono B."/>
            <person name="Della Gatta G."/>
            <person name="di Bernardo D."/>
            <person name="Down T."/>
            <person name="Engstrom P."/>
            <person name="Fagiolini M."/>
            <person name="Faulkner G."/>
            <person name="Fletcher C.F."/>
            <person name="Fukushima T."/>
            <person name="Furuno M."/>
            <person name="Futaki S."/>
            <person name="Gariboldi M."/>
            <person name="Georgii-Hemming P."/>
            <person name="Gingeras T.R."/>
            <person name="Gojobori T."/>
            <person name="Green R.E."/>
            <person name="Gustincich S."/>
            <person name="Harbers M."/>
            <person name="Hayashi Y."/>
            <person name="Hensch T.K."/>
            <person name="Hirokawa N."/>
            <person name="Hill D."/>
            <person name="Huminiecki L."/>
            <person name="Iacono M."/>
            <person name="Ikeo K."/>
            <person name="Iwama A."/>
            <person name="Ishikawa T."/>
            <person name="Jakt M."/>
            <person name="Kanapin A."/>
            <person name="Katoh M."/>
            <person name="Kawasawa Y."/>
            <person name="Kelso J."/>
            <person name="Kitamura H."/>
            <person name="Kitano H."/>
            <person name="Kollias G."/>
            <person name="Krishnan S.P."/>
            <person name="Kruger A."/>
            <person name="Kummerfeld S.K."/>
            <person name="Kurochkin I.V."/>
            <person name="Lareau L.F."/>
            <person name="Lazarevic D."/>
            <person name="Lipovich L."/>
            <person name="Liu J."/>
            <person name="Liuni S."/>
            <person name="McWilliam S."/>
            <person name="Madan Babu M."/>
            <person name="Madera M."/>
            <person name="Marchionni L."/>
            <person name="Matsuda H."/>
            <person name="Matsuzawa S."/>
            <person name="Miki H."/>
            <person name="Mignone F."/>
            <person name="Miyake S."/>
            <person name="Morris K."/>
            <person name="Mottagui-Tabar S."/>
            <person name="Mulder N."/>
            <person name="Nakano N."/>
            <person name="Nakauchi H."/>
            <person name="Ng P."/>
            <person name="Nilsson R."/>
            <person name="Nishiguchi S."/>
            <person name="Nishikawa S."/>
            <person name="Nori F."/>
            <person name="Ohara O."/>
            <person name="Okazaki Y."/>
            <person name="Orlando V."/>
            <person name="Pang K.C."/>
            <person name="Pavan W.J."/>
            <person name="Pavesi G."/>
            <person name="Pesole G."/>
            <person name="Petrovsky N."/>
            <person name="Piazza S."/>
            <person name="Reed J."/>
            <person name="Reid J.F."/>
            <person name="Ring B.Z."/>
            <person name="Ringwald M."/>
            <person name="Rost B."/>
            <person name="Ruan Y."/>
            <person name="Salzberg S.L."/>
            <person name="Sandelin A."/>
            <person name="Schneider C."/>
            <person name="Schoenbach C."/>
            <person name="Sekiguchi K."/>
            <person name="Semple C.A."/>
            <person name="Seno S."/>
            <person name="Sessa L."/>
            <person name="Sheng Y."/>
            <person name="Shibata Y."/>
            <person name="Shimada H."/>
            <person name="Shimada K."/>
            <person name="Silva D."/>
            <person name="Sinclair B."/>
            <person name="Sperling S."/>
            <person name="Stupka E."/>
            <person name="Sugiura K."/>
            <person name="Sultana R."/>
            <person name="Takenaka Y."/>
            <person name="Taki K."/>
            <person name="Tammoja K."/>
            <person name="Tan S.L."/>
            <person name="Tang S."/>
            <person name="Taylor M.S."/>
            <person name="Tegner J."/>
            <person name="Teichmann S.A."/>
            <person name="Ueda H.R."/>
            <person name="van Nimwegen E."/>
            <person name="Verardo R."/>
            <person name="Wei C.L."/>
            <person name="Yagi K."/>
            <person name="Yamanishi H."/>
            <person name="Zabarovsky E."/>
            <person name="Zhu S."/>
            <person name="Zimmer A."/>
            <person name="Hide W."/>
            <person name="Bult C."/>
            <person name="Grimmond S.M."/>
            <person name="Teasdale R.D."/>
            <person name="Liu E.T."/>
            <person name="Brusic V."/>
            <person name="Quackenbush J."/>
            <person name="Wahlestedt C."/>
            <person name="Mattick J.S."/>
            <person name="Hume D.A."/>
            <person name="Kai C."/>
            <person name="Sasaki D."/>
            <person name="Tomaru Y."/>
            <person name="Fukuda S."/>
            <person name="Kanamori-Katayama M."/>
            <person name="Suzuki M."/>
            <person name="Aoki J."/>
            <person name="Arakawa T."/>
            <person name="Iida J."/>
            <person name="Imamura K."/>
            <person name="Itoh M."/>
            <person name="Kato T."/>
            <person name="Kawaji H."/>
            <person name="Kawagashira N."/>
            <person name="Kawashima T."/>
            <person name="Kojima M."/>
            <person name="Kondo S."/>
            <person name="Konno H."/>
            <person name="Nakano K."/>
            <person name="Ninomiya N."/>
            <person name="Nishio T."/>
            <person name="Okada M."/>
            <person name="Plessy C."/>
            <person name="Shibata K."/>
            <person name="Shiraki T."/>
            <person name="Suzuki S."/>
            <person name="Tagami M."/>
            <person name="Waki K."/>
            <person name="Watahiki A."/>
            <person name="Okamura-Oho Y."/>
            <person name="Suzuki H."/>
            <person name="Kawai J."/>
            <person name="Hayashizaki Y."/>
        </authorList>
    </citation>
    <scope>NUCLEOTIDE SEQUENCE [LARGE SCALE MRNA]</scope>
    <source>
        <strain>C57BL/6J</strain>
        <tissue>Testis</tissue>
    </source>
</reference>
<reference key="2">
    <citation type="journal article" date="2004" name="Genome Res.">
        <title>The status, quality, and expansion of the NIH full-length cDNA project: the Mammalian Gene Collection (MGC).</title>
        <authorList>
            <consortium name="The MGC Project Team"/>
        </authorList>
    </citation>
    <scope>NUCLEOTIDE SEQUENCE [LARGE SCALE MRNA]</scope>
    <source>
        <tissue>Testis</tissue>
    </source>
</reference>
<reference key="3">
    <citation type="journal article" date="2020" name="IScience">
        <title>Discovery of a Vertebrate-Specific Factor that Processes Flagellar Glycolytic Enolase during Motile Ciliogenesis.</title>
        <authorList>
            <person name="Narita K."/>
            <person name="Nagatomo H."/>
            <person name="Kozuka-Hata H."/>
            <person name="Oyama M."/>
            <person name="Takeda S."/>
        </authorList>
    </citation>
    <scope>TISSUE SPECIFICITY</scope>
    <scope>DISRUPTION PHENOTYPE</scope>
    <scope>FUNCTION</scope>
    <scope>SUBCELLULAR LOCATION</scope>
    <scope>DEVELOPMENTAL STAGE</scope>
</reference>
<accession>Q80Y73</accession>
<accession>Q3V0W8</accession>
<gene>
    <name evidence="6" type="primary">Hoatz</name>
    <name evidence="3" type="synonym">Hoatzin</name>
</gene>
<name>HOATZ_MOUSE</name>
<dbReference type="EMBL" id="AK132837">
    <property type="protein sequence ID" value="BAE21385.1"/>
    <property type="molecule type" value="mRNA"/>
</dbReference>
<dbReference type="EMBL" id="BC048587">
    <property type="protein sequence ID" value="AAH48587.1"/>
    <property type="molecule type" value="mRNA"/>
</dbReference>
<dbReference type="CCDS" id="CCDS40628.1"/>
<dbReference type="RefSeq" id="NP_808370.1">
    <property type="nucleotide sequence ID" value="NM_177702.4"/>
</dbReference>
<dbReference type="RefSeq" id="XP_030100186.1">
    <property type="nucleotide sequence ID" value="XM_030244326.2"/>
</dbReference>
<dbReference type="RefSeq" id="XP_030100187.1">
    <property type="nucleotide sequence ID" value="XM_030244327.1"/>
</dbReference>
<dbReference type="SMR" id="Q80Y73"/>
<dbReference type="FunCoup" id="Q80Y73">
    <property type="interactions" value="39"/>
</dbReference>
<dbReference type="STRING" id="10090.ENSMUSP00000126725"/>
<dbReference type="iPTMnet" id="Q80Y73"/>
<dbReference type="PhosphoSitePlus" id="Q80Y73"/>
<dbReference type="PaxDb" id="10090-ENSMUSP00000126725"/>
<dbReference type="Antibodypedia" id="62221">
    <property type="antibodies" value="2 antibodies from 2 providers"/>
</dbReference>
<dbReference type="DNASU" id="235345"/>
<dbReference type="Ensembl" id="ENSMUST00000170947.3">
    <property type="protein sequence ID" value="ENSMUSP00000126725.2"/>
    <property type="gene ID" value="ENSMUSG00000032057.10"/>
</dbReference>
<dbReference type="GeneID" id="235345"/>
<dbReference type="KEGG" id="mmu:235345"/>
<dbReference type="UCSC" id="uc009plc.1">
    <property type="organism name" value="mouse"/>
</dbReference>
<dbReference type="AGR" id="MGI:1921013"/>
<dbReference type="CTD" id="399949"/>
<dbReference type="MGI" id="MGI:1921013">
    <property type="gene designation" value="Hoatz"/>
</dbReference>
<dbReference type="VEuPathDB" id="HostDB:ENSMUSG00000032057"/>
<dbReference type="eggNOG" id="ENOG502S8UY">
    <property type="taxonomic scope" value="Eukaryota"/>
</dbReference>
<dbReference type="GeneTree" id="ENSGT00390000002677"/>
<dbReference type="HOGENOM" id="CLU_122904_0_0_1"/>
<dbReference type="InParanoid" id="Q80Y73"/>
<dbReference type="OMA" id="TVCSERQ"/>
<dbReference type="OrthoDB" id="10004365at2759"/>
<dbReference type="PhylomeDB" id="Q80Y73"/>
<dbReference type="TreeFam" id="TF328616"/>
<dbReference type="BioGRID-ORCS" id="235345">
    <property type="hits" value="1 hit in 77 CRISPR screens"/>
</dbReference>
<dbReference type="PRO" id="PR:Q80Y73"/>
<dbReference type="Proteomes" id="UP000000589">
    <property type="component" value="Chromosome 9"/>
</dbReference>
<dbReference type="RNAct" id="Q80Y73">
    <property type="molecule type" value="protein"/>
</dbReference>
<dbReference type="Bgee" id="ENSMUSG00000032057">
    <property type="expression patterns" value="Expressed in choroid plexus epithelium and 42 other cell types or tissues"/>
</dbReference>
<dbReference type="GO" id="GO:0005929">
    <property type="term" value="C:cilium"/>
    <property type="evidence" value="ECO:0000314"/>
    <property type="project" value="UniProtKB"/>
</dbReference>
<dbReference type="GO" id="GO:0005737">
    <property type="term" value="C:cytoplasm"/>
    <property type="evidence" value="ECO:0000314"/>
    <property type="project" value="UniProtKB"/>
</dbReference>
<dbReference type="GO" id="GO:0035082">
    <property type="term" value="P:axoneme assembly"/>
    <property type="evidence" value="ECO:0000315"/>
    <property type="project" value="UniProtKB"/>
</dbReference>
<dbReference type="GO" id="GO:0060271">
    <property type="term" value="P:cilium assembly"/>
    <property type="evidence" value="ECO:0000315"/>
    <property type="project" value="UniProtKB"/>
</dbReference>
<dbReference type="GO" id="GO:0030317">
    <property type="term" value="P:flagellated sperm motility"/>
    <property type="evidence" value="ECO:0000315"/>
    <property type="project" value="UniProtKB"/>
</dbReference>
<dbReference type="GO" id="GO:0007283">
    <property type="term" value="P:spermatogenesis"/>
    <property type="evidence" value="ECO:0000315"/>
    <property type="project" value="UniProtKB"/>
</dbReference>
<dbReference type="InterPro" id="IPR040681">
    <property type="entry name" value="HOATZ-like"/>
</dbReference>
<dbReference type="PANTHER" id="PTHR47231:SF1">
    <property type="entry name" value="CILIA- AND FLAGELLA-ASSOCIATED PROTEIN HOATZ"/>
    <property type="match status" value="1"/>
</dbReference>
<dbReference type="PANTHER" id="PTHR47231">
    <property type="entry name" value="UPF0722 PROTEIN C11ORF88"/>
    <property type="match status" value="1"/>
</dbReference>
<dbReference type="Pfam" id="PF17664">
    <property type="entry name" value="HOATZ-like"/>
    <property type="match status" value="1"/>
</dbReference>
<protein>
    <recommendedName>
        <fullName evidence="5">Cilia- and flagella-associated protein HOATZ</fullName>
    </recommendedName>
</protein>
<keyword id="KW-0966">Cell projection</keyword>
<keyword id="KW-0970">Cilium biogenesis/degradation</keyword>
<keyword id="KW-0963">Cytoplasm</keyword>
<keyword id="KW-1185">Reference proteome</keyword>
<sequence>METGPRGCPSGRKESQEICSPGLLVFTGCSEQDANLAKQFWLGASMYPTTESQLVLTRGSSQRLPVARNSKVVLREKSSVQPFPFDQDKDAIIFAKAQRIQESEERAKYLQKAKTRDEILQLLRKQREERISKELISLPYKPKDKVPKSKEVLSESGLRDQEEVKALE</sequence>